<feature type="chain" id="PRO_1000056605" description="Ribosomal RNA small subunit methyltransferase A">
    <location>
        <begin position="1"/>
        <end position="275"/>
    </location>
</feature>
<feature type="binding site" evidence="1">
    <location>
        <position position="19"/>
    </location>
    <ligand>
        <name>S-adenosyl-L-methionine</name>
        <dbReference type="ChEBI" id="CHEBI:59789"/>
    </ligand>
</feature>
<feature type="binding site" evidence="1">
    <location>
        <position position="21"/>
    </location>
    <ligand>
        <name>S-adenosyl-L-methionine</name>
        <dbReference type="ChEBI" id="CHEBI:59789"/>
    </ligand>
</feature>
<feature type="binding site" evidence="1">
    <location>
        <position position="46"/>
    </location>
    <ligand>
        <name>S-adenosyl-L-methionine</name>
        <dbReference type="ChEBI" id="CHEBI:59789"/>
    </ligand>
</feature>
<feature type="binding site" evidence="1">
    <location>
        <position position="71"/>
    </location>
    <ligand>
        <name>S-adenosyl-L-methionine</name>
        <dbReference type="ChEBI" id="CHEBI:59789"/>
    </ligand>
</feature>
<feature type="binding site" evidence="1">
    <location>
        <position position="94"/>
    </location>
    <ligand>
        <name>S-adenosyl-L-methionine</name>
        <dbReference type="ChEBI" id="CHEBI:59789"/>
    </ligand>
</feature>
<feature type="binding site" evidence="1">
    <location>
        <position position="117"/>
    </location>
    <ligand>
        <name>S-adenosyl-L-methionine</name>
        <dbReference type="ChEBI" id="CHEBI:59789"/>
    </ligand>
</feature>
<dbReference type="EC" id="2.1.1.182" evidence="1"/>
<dbReference type="EMBL" id="CP000546">
    <property type="protein sequence ID" value="ABN01334.1"/>
    <property type="molecule type" value="Genomic_DNA"/>
</dbReference>
<dbReference type="RefSeq" id="WP_004189099.1">
    <property type="nucleotide sequence ID" value="NC_008836.1"/>
</dbReference>
<dbReference type="SMR" id="A2S8N7"/>
<dbReference type="GeneID" id="92977989"/>
<dbReference type="KEGG" id="bml:BMA10229_A2344"/>
<dbReference type="HOGENOM" id="CLU_041220_0_1_4"/>
<dbReference type="Proteomes" id="UP000002283">
    <property type="component" value="Chromosome I"/>
</dbReference>
<dbReference type="GO" id="GO:0005829">
    <property type="term" value="C:cytosol"/>
    <property type="evidence" value="ECO:0007669"/>
    <property type="project" value="TreeGrafter"/>
</dbReference>
<dbReference type="GO" id="GO:0052908">
    <property type="term" value="F:16S rRNA (adenine(1518)-N(6)/adenine(1519)-N(6))-dimethyltransferase activity"/>
    <property type="evidence" value="ECO:0007669"/>
    <property type="project" value="UniProtKB-EC"/>
</dbReference>
<dbReference type="GO" id="GO:0003723">
    <property type="term" value="F:RNA binding"/>
    <property type="evidence" value="ECO:0007669"/>
    <property type="project" value="UniProtKB-KW"/>
</dbReference>
<dbReference type="FunFam" id="1.10.8.100:FF:000001">
    <property type="entry name" value="Ribosomal RNA small subunit methyltransferase A"/>
    <property type="match status" value="1"/>
</dbReference>
<dbReference type="Gene3D" id="1.10.8.100">
    <property type="entry name" value="Ribosomal RNA adenine dimethylase-like, domain 2"/>
    <property type="match status" value="1"/>
</dbReference>
<dbReference type="Gene3D" id="3.40.50.150">
    <property type="entry name" value="Vaccinia Virus protein VP39"/>
    <property type="match status" value="1"/>
</dbReference>
<dbReference type="HAMAP" id="MF_00607">
    <property type="entry name" value="16SrRNA_methyltr_A"/>
    <property type="match status" value="1"/>
</dbReference>
<dbReference type="InterPro" id="IPR001737">
    <property type="entry name" value="KsgA/Erm"/>
</dbReference>
<dbReference type="InterPro" id="IPR023165">
    <property type="entry name" value="rRNA_Ade_diMease-like_C"/>
</dbReference>
<dbReference type="InterPro" id="IPR020598">
    <property type="entry name" value="rRNA_Ade_methylase_Trfase_N"/>
</dbReference>
<dbReference type="InterPro" id="IPR011530">
    <property type="entry name" value="rRNA_adenine_dimethylase"/>
</dbReference>
<dbReference type="InterPro" id="IPR029063">
    <property type="entry name" value="SAM-dependent_MTases_sf"/>
</dbReference>
<dbReference type="NCBIfam" id="TIGR00755">
    <property type="entry name" value="ksgA"/>
    <property type="match status" value="1"/>
</dbReference>
<dbReference type="PANTHER" id="PTHR11727">
    <property type="entry name" value="DIMETHYLADENOSINE TRANSFERASE"/>
    <property type="match status" value="1"/>
</dbReference>
<dbReference type="PANTHER" id="PTHR11727:SF7">
    <property type="entry name" value="DIMETHYLADENOSINE TRANSFERASE-RELATED"/>
    <property type="match status" value="1"/>
</dbReference>
<dbReference type="Pfam" id="PF00398">
    <property type="entry name" value="RrnaAD"/>
    <property type="match status" value="1"/>
</dbReference>
<dbReference type="SMART" id="SM00650">
    <property type="entry name" value="rADc"/>
    <property type="match status" value="1"/>
</dbReference>
<dbReference type="SUPFAM" id="SSF53335">
    <property type="entry name" value="S-adenosyl-L-methionine-dependent methyltransferases"/>
    <property type="match status" value="1"/>
</dbReference>
<dbReference type="PROSITE" id="PS51689">
    <property type="entry name" value="SAM_RNA_A_N6_MT"/>
    <property type="match status" value="1"/>
</dbReference>
<protein>
    <recommendedName>
        <fullName evidence="1">Ribosomal RNA small subunit methyltransferase A</fullName>
        <ecNumber evidence="1">2.1.1.182</ecNumber>
    </recommendedName>
    <alternativeName>
        <fullName evidence="1">16S rRNA (adenine(1518)-N(6)/adenine(1519)-N(6))-dimethyltransferase</fullName>
    </alternativeName>
    <alternativeName>
        <fullName evidence="1">16S rRNA dimethyladenosine transferase</fullName>
    </alternativeName>
    <alternativeName>
        <fullName evidence="1">16S rRNA dimethylase</fullName>
    </alternativeName>
    <alternativeName>
        <fullName evidence="1">S-adenosylmethionine-6-N', N'-adenosyl(rRNA) dimethyltransferase</fullName>
    </alternativeName>
</protein>
<gene>
    <name evidence="1" type="primary">rsmA</name>
    <name evidence="1" type="synonym">ksgA</name>
    <name type="ordered locus">BMA10229_A2344</name>
</gene>
<sequence>MSNSRQHQGHFARKRFGQNFLVDHGVIDAIVAAIRPERGERMVEIGPGLGALTGPVIARLATPGSPLHAVELDRDLIGRLEQRFGELLELHAGDALTFDFGSIARPGDEPSLRIIGNLPYNISSPLLFHLMSFAPVVIDQHFMLQNEVVERMVAEPGTKAFSRLSVMLQYRYVMDKLIDVPPESFQPPPKVDSAIVRMIPHAPHELPAVDPAVLGEVVTAAFSQRRKMLRNTLGGYRDLVDFDALGFDLARRAEDIGVDEYVRVAQAVASARASG</sequence>
<name>RSMA_BURM9</name>
<evidence type="ECO:0000255" key="1">
    <source>
        <dbReference type="HAMAP-Rule" id="MF_00607"/>
    </source>
</evidence>
<proteinExistence type="inferred from homology"/>
<accession>A2S8N7</accession>
<keyword id="KW-0963">Cytoplasm</keyword>
<keyword id="KW-0489">Methyltransferase</keyword>
<keyword id="KW-0694">RNA-binding</keyword>
<keyword id="KW-0698">rRNA processing</keyword>
<keyword id="KW-0949">S-adenosyl-L-methionine</keyword>
<keyword id="KW-0808">Transferase</keyword>
<comment type="function">
    <text evidence="1">Specifically dimethylates two adjacent adenosines (A1518 and A1519) in the loop of a conserved hairpin near the 3'-end of 16S rRNA in the 30S particle. May play a critical role in biogenesis of 30S subunits.</text>
</comment>
<comment type="catalytic activity">
    <reaction evidence="1">
        <text>adenosine(1518)/adenosine(1519) in 16S rRNA + 4 S-adenosyl-L-methionine = N(6)-dimethyladenosine(1518)/N(6)-dimethyladenosine(1519) in 16S rRNA + 4 S-adenosyl-L-homocysteine + 4 H(+)</text>
        <dbReference type="Rhea" id="RHEA:19609"/>
        <dbReference type="Rhea" id="RHEA-COMP:10232"/>
        <dbReference type="Rhea" id="RHEA-COMP:10233"/>
        <dbReference type="ChEBI" id="CHEBI:15378"/>
        <dbReference type="ChEBI" id="CHEBI:57856"/>
        <dbReference type="ChEBI" id="CHEBI:59789"/>
        <dbReference type="ChEBI" id="CHEBI:74411"/>
        <dbReference type="ChEBI" id="CHEBI:74493"/>
        <dbReference type="EC" id="2.1.1.182"/>
    </reaction>
</comment>
<comment type="subcellular location">
    <subcellularLocation>
        <location evidence="1">Cytoplasm</location>
    </subcellularLocation>
</comment>
<comment type="similarity">
    <text evidence="1">Belongs to the class I-like SAM-binding methyltransferase superfamily. rRNA adenine N(6)-methyltransferase family. RsmA subfamily.</text>
</comment>
<reference key="1">
    <citation type="journal article" date="2010" name="Genome Biol. Evol.">
        <title>Continuing evolution of Burkholderia mallei through genome reduction and large-scale rearrangements.</title>
        <authorList>
            <person name="Losada L."/>
            <person name="Ronning C.M."/>
            <person name="DeShazer D."/>
            <person name="Woods D."/>
            <person name="Fedorova N."/>
            <person name="Kim H.S."/>
            <person name="Shabalina S.A."/>
            <person name="Pearson T.R."/>
            <person name="Brinkac L."/>
            <person name="Tan P."/>
            <person name="Nandi T."/>
            <person name="Crabtree J."/>
            <person name="Badger J."/>
            <person name="Beckstrom-Sternberg S."/>
            <person name="Saqib M."/>
            <person name="Schutzer S.E."/>
            <person name="Keim P."/>
            <person name="Nierman W.C."/>
        </authorList>
    </citation>
    <scope>NUCLEOTIDE SEQUENCE [LARGE SCALE GENOMIC DNA]</scope>
    <source>
        <strain>NCTC 10229</strain>
    </source>
</reference>
<organism>
    <name type="scientific">Burkholderia mallei (strain NCTC 10229)</name>
    <dbReference type="NCBI Taxonomy" id="412022"/>
    <lineage>
        <taxon>Bacteria</taxon>
        <taxon>Pseudomonadati</taxon>
        <taxon>Pseudomonadota</taxon>
        <taxon>Betaproteobacteria</taxon>
        <taxon>Burkholderiales</taxon>
        <taxon>Burkholderiaceae</taxon>
        <taxon>Burkholderia</taxon>
        <taxon>pseudomallei group</taxon>
    </lineage>
</organism>